<comment type="function">
    <text evidence="1">DNA-dependent RNA polymerase catalyzes the transcription of DNA into RNA using the four ribonucleoside triphosphates as substrates.</text>
</comment>
<comment type="catalytic activity">
    <reaction evidence="1">
        <text>RNA(n) + a ribonucleoside 5'-triphosphate = RNA(n+1) + diphosphate</text>
        <dbReference type="Rhea" id="RHEA:21248"/>
        <dbReference type="Rhea" id="RHEA-COMP:14527"/>
        <dbReference type="Rhea" id="RHEA-COMP:17342"/>
        <dbReference type="ChEBI" id="CHEBI:33019"/>
        <dbReference type="ChEBI" id="CHEBI:61557"/>
        <dbReference type="ChEBI" id="CHEBI:140395"/>
        <dbReference type="EC" id="2.7.7.6"/>
    </reaction>
</comment>
<comment type="cofactor">
    <cofactor evidence="1">
        <name>Mg(2+)</name>
        <dbReference type="ChEBI" id="CHEBI:18420"/>
    </cofactor>
    <text evidence="1">Binds 1 Mg(2+) ion per subunit.</text>
</comment>
<comment type="cofactor">
    <cofactor evidence="1">
        <name>Zn(2+)</name>
        <dbReference type="ChEBI" id="CHEBI:29105"/>
    </cofactor>
    <text evidence="1">Binds 2 Zn(2+) ions per subunit.</text>
</comment>
<comment type="subunit">
    <text evidence="1">The RNAP catalytic core consists of 2 alpha, 1 beta, 1 beta' and 1 omega subunit. When a sigma factor is associated with the core the holoenzyme is formed, which can initiate transcription.</text>
</comment>
<comment type="similarity">
    <text evidence="1">Belongs to the RNA polymerase beta' chain family.</text>
</comment>
<keyword id="KW-0240">DNA-directed RNA polymerase</keyword>
<keyword id="KW-0460">Magnesium</keyword>
<keyword id="KW-0479">Metal-binding</keyword>
<keyword id="KW-0548">Nucleotidyltransferase</keyword>
<keyword id="KW-0804">Transcription</keyword>
<keyword id="KW-0808">Transferase</keyword>
<keyword id="KW-0862">Zinc</keyword>
<accession>B7KN46</accession>
<protein>
    <recommendedName>
        <fullName evidence="1">DNA-directed RNA polymerase subunit beta'</fullName>
        <shortName evidence="1">RNAP subunit beta'</shortName>
        <ecNumber evidence="1">2.7.7.6</ecNumber>
    </recommendedName>
    <alternativeName>
        <fullName evidence="1">RNA polymerase subunit beta'</fullName>
    </alternativeName>
    <alternativeName>
        <fullName evidence="1">Transcriptase subunit beta'</fullName>
    </alternativeName>
</protein>
<reference key="1">
    <citation type="submission" date="2008-12" db="EMBL/GenBank/DDBJ databases">
        <title>Complete sequence of chromosome of Methylobacterium chloromethanicum CM4.</title>
        <authorList>
            <consortium name="US DOE Joint Genome Institute"/>
            <person name="Lucas S."/>
            <person name="Copeland A."/>
            <person name="Lapidus A."/>
            <person name="Glavina del Rio T."/>
            <person name="Dalin E."/>
            <person name="Tice H."/>
            <person name="Bruce D."/>
            <person name="Goodwin L."/>
            <person name="Pitluck S."/>
            <person name="Chertkov O."/>
            <person name="Brettin T."/>
            <person name="Detter J.C."/>
            <person name="Han C."/>
            <person name="Larimer F."/>
            <person name="Land M."/>
            <person name="Hauser L."/>
            <person name="Kyrpides N."/>
            <person name="Mikhailova N."/>
            <person name="Marx C."/>
            <person name="Richardson P."/>
        </authorList>
    </citation>
    <scope>NUCLEOTIDE SEQUENCE [LARGE SCALE GENOMIC DNA]</scope>
    <source>
        <strain>CM4 / NCIMB 13688</strain>
    </source>
</reference>
<dbReference type="EC" id="2.7.7.6" evidence="1"/>
<dbReference type="EMBL" id="CP001298">
    <property type="protein sequence ID" value="ACK85163.1"/>
    <property type="molecule type" value="Genomic_DNA"/>
</dbReference>
<dbReference type="RefSeq" id="WP_012255172.1">
    <property type="nucleotide sequence ID" value="NC_011757.1"/>
</dbReference>
<dbReference type="SMR" id="B7KN46"/>
<dbReference type="GeneID" id="72991736"/>
<dbReference type="KEGG" id="mch:Mchl_4387"/>
<dbReference type="HOGENOM" id="CLU_000524_3_1_5"/>
<dbReference type="Proteomes" id="UP000002385">
    <property type="component" value="Chromosome"/>
</dbReference>
<dbReference type="GO" id="GO:0000428">
    <property type="term" value="C:DNA-directed RNA polymerase complex"/>
    <property type="evidence" value="ECO:0007669"/>
    <property type="project" value="UniProtKB-KW"/>
</dbReference>
<dbReference type="GO" id="GO:0003677">
    <property type="term" value="F:DNA binding"/>
    <property type="evidence" value="ECO:0007669"/>
    <property type="project" value="UniProtKB-UniRule"/>
</dbReference>
<dbReference type="GO" id="GO:0003899">
    <property type="term" value="F:DNA-directed RNA polymerase activity"/>
    <property type="evidence" value="ECO:0007669"/>
    <property type="project" value="UniProtKB-UniRule"/>
</dbReference>
<dbReference type="GO" id="GO:0000287">
    <property type="term" value="F:magnesium ion binding"/>
    <property type="evidence" value="ECO:0007669"/>
    <property type="project" value="UniProtKB-UniRule"/>
</dbReference>
<dbReference type="GO" id="GO:0008270">
    <property type="term" value="F:zinc ion binding"/>
    <property type="evidence" value="ECO:0007669"/>
    <property type="project" value="UniProtKB-UniRule"/>
</dbReference>
<dbReference type="GO" id="GO:0006351">
    <property type="term" value="P:DNA-templated transcription"/>
    <property type="evidence" value="ECO:0007669"/>
    <property type="project" value="UniProtKB-UniRule"/>
</dbReference>
<dbReference type="CDD" id="cd02655">
    <property type="entry name" value="RNAP_beta'_C"/>
    <property type="match status" value="1"/>
</dbReference>
<dbReference type="CDD" id="cd01609">
    <property type="entry name" value="RNAP_beta'_N"/>
    <property type="match status" value="1"/>
</dbReference>
<dbReference type="Gene3D" id="1.10.132.30">
    <property type="match status" value="1"/>
</dbReference>
<dbReference type="Gene3D" id="1.10.150.390">
    <property type="match status" value="1"/>
</dbReference>
<dbReference type="Gene3D" id="1.10.1790.20">
    <property type="match status" value="1"/>
</dbReference>
<dbReference type="Gene3D" id="1.10.40.90">
    <property type="match status" value="1"/>
</dbReference>
<dbReference type="Gene3D" id="2.40.40.20">
    <property type="match status" value="1"/>
</dbReference>
<dbReference type="Gene3D" id="2.40.50.100">
    <property type="match status" value="3"/>
</dbReference>
<dbReference type="Gene3D" id="4.10.860.120">
    <property type="entry name" value="RNA polymerase II, clamp domain"/>
    <property type="match status" value="1"/>
</dbReference>
<dbReference type="Gene3D" id="1.10.274.100">
    <property type="entry name" value="RNA polymerase Rpb1, domain 3"/>
    <property type="match status" value="2"/>
</dbReference>
<dbReference type="HAMAP" id="MF_01322">
    <property type="entry name" value="RNApol_bact_RpoC"/>
    <property type="match status" value="1"/>
</dbReference>
<dbReference type="InterPro" id="IPR045867">
    <property type="entry name" value="DNA-dir_RpoC_beta_prime"/>
</dbReference>
<dbReference type="InterPro" id="IPR012754">
    <property type="entry name" value="DNA-dir_RpoC_beta_prime_bact"/>
</dbReference>
<dbReference type="InterPro" id="IPR000722">
    <property type="entry name" value="RNA_pol_asu"/>
</dbReference>
<dbReference type="InterPro" id="IPR006592">
    <property type="entry name" value="RNA_pol_N"/>
</dbReference>
<dbReference type="InterPro" id="IPR007080">
    <property type="entry name" value="RNA_pol_Rpb1_1"/>
</dbReference>
<dbReference type="InterPro" id="IPR007066">
    <property type="entry name" value="RNA_pol_Rpb1_3"/>
</dbReference>
<dbReference type="InterPro" id="IPR042102">
    <property type="entry name" value="RNA_pol_Rpb1_3_sf"/>
</dbReference>
<dbReference type="InterPro" id="IPR007083">
    <property type="entry name" value="RNA_pol_Rpb1_4"/>
</dbReference>
<dbReference type="InterPro" id="IPR007081">
    <property type="entry name" value="RNA_pol_Rpb1_5"/>
</dbReference>
<dbReference type="InterPro" id="IPR044893">
    <property type="entry name" value="RNA_pol_Rpb1_clamp_domain"/>
</dbReference>
<dbReference type="InterPro" id="IPR038120">
    <property type="entry name" value="Rpb1_funnel_sf"/>
</dbReference>
<dbReference type="NCBIfam" id="TIGR02386">
    <property type="entry name" value="rpoC_TIGR"/>
    <property type="match status" value="1"/>
</dbReference>
<dbReference type="PANTHER" id="PTHR19376">
    <property type="entry name" value="DNA-DIRECTED RNA POLYMERASE"/>
    <property type="match status" value="1"/>
</dbReference>
<dbReference type="PANTHER" id="PTHR19376:SF54">
    <property type="entry name" value="DNA-DIRECTED RNA POLYMERASE SUBUNIT BETA"/>
    <property type="match status" value="1"/>
</dbReference>
<dbReference type="Pfam" id="PF04997">
    <property type="entry name" value="RNA_pol_Rpb1_1"/>
    <property type="match status" value="1"/>
</dbReference>
<dbReference type="Pfam" id="PF00623">
    <property type="entry name" value="RNA_pol_Rpb1_2"/>
    <property type="match status" value="1"/>
</dbReference>
<dbReference type="Pfam" id="PF04983">
    <property type="entry name" value="RNA_pol_Rpb1_3"/>
    <property type="match status" value="1"/>
</dbReference>
<dbReference type="Pfam" id="PF05000">
    <property type="entry name" value="RNA_pol_Rpb1_4"/>
    <property type="match status" value="1"/>
</dbReference>
<dbReference type="Pfam" id="PF04998">
    <property type="entry name" value="RNA_pol_Rpb1_5"/>
    <property type="match status" value="1"/>
</dbReference>
<dbReference type="SMART" id="SM00663">
    <property type="entry name" value="RPOLA_N"/>
    <property type="match status" value="1"/>
</dbReference>
<dbReference type="SUPFAM" id="SSF64484">
    <property type="entry name" value="beta and beta-prime subunits of DNA dependent RNA-polymerase"/>
    <property type="match status" value="1"/>
</dbReference>
<evidence type="ECO:0000255" key="1">
    <source>
        <dbReference type="HAMAP-Rule" id="MF_01322"/>
    </source>
</evidence>
<gene>
    <name evidence="1" type="primary">rpoC</name>
    <name type="ordered locus">Mchl_4387</name>
</gene>
<name>RPOC_METC4</name>
<organism>
    <name type="scientific">Methylorubrum extorquens (strain CM4 / NCIMB 13688)</name>
    <name type="common">Methylobacterium extorquens</name>
    <dbReference type="NCBI Taxonomy" id="440085"/>
    <lineage>
        <taxon>Bacteria</taxon>
        <taxon>Pseudomonadati</taxon>
        <taxon>Pseudomonadota</taxon>
        <taxon>Alphaproteobacteria</taxon>
        <taxon>Hyphomicrobiales</taxon>
        <taxon>Methylobacteriaceae</taxon>
        <taxon>Methylorubrum</taxon>
    </lineage>
</organism>
<proteinExistence type="inferred from homology"/>
<sequence length="1405" mass="154860">MNQEVMNLFNQQAQPQSFDQIKISISSPEKILSWSYGEIKKPETINYRTFKPERDGLFCARIFGPIKDYECLCGKYKRMKYKGVICEKCGVEVTLARVRRDRMGHIELAAPVAHIWFLKSLPSRIGLLLDMALKDLERILYFESYVVIEPGLTPLKERQLLSEEEYLRAQEEYGEDSFTAMIGAEAIRRILMELDLEGIATSLKEEIATTTSELKPKKLMKRLKIIEAFQLSGNKPEWMILTVVPVIPPDLRPLVPLDGGRFATSDLNDLYRRVINRNNRLKRLIELRAPDIIIRNEKRMLQEAVDALFDNGRRGRVITGANKRPLKSLADMLKGKQGRFRQNLLGKRVDYSGRSVIVVGPELKLHQCGLPKKMALELFKPFIYARLDAKGFSATVKQAKKLVEKEKPEVWDILDEVIREHPVMLNRAPTLHRLGIQAFEPKLIEGKAIQLHPLVCAAFNADFDGDQMAVHVPLSLEAQLEARVLMMSTNNILHPANGQPIIVPSQDIVLGLYYLSIVADGSVGEHKADDKNNPMQGVFGDIGQLEHALAAKSVSLHSKIKWRWRGLGPDGEPVSRIYDTTPGRVILSGVLPMHPKVPFDVVNKLMTKKEISAMIDTVYRHCGQKESVIFCDRIMALGFSHAFKAGISFGKDDMVVPENKWSIVEDTRTLVKDYEQQYNDGLITQGEKYNKVVDAWAKCSDKLAAEMMGRISAVQKDENGADKQVNSIYMMSHSGARGSPAQMKQLAAMRGLMAKPSGEIIETPIISNFKEGLDVLEYFNSTHGARKGLADTALKTANSGYLTRRLVDVAQDAVIREVDCGTTNGIKMRAIIDAGQVVAPLSIRILGRATAEDLVAQDGTVIVKTNETIEERHLPAINAAGIQEVKIRSVLVCQTKSGVCATCYGRDLARGTPVNMGEAVGVIAAQSIGEPGTQLTMRTFHIGGAAQIADSSFVESSFEGTIKIRNRSLAKNSDGDLIATGRSVAVVIVGPDGTERAVHRLQYGARVRVDEGDTIKRGQRIAEWDPYTRPIVAEVDGIVGYEDLYDGQSITETTDESTGIAKRVVIDWRGSSRTSDLKPAMLVLDQDGKPVKLARGSDARYYLPVDAIIGLDPGAKVRAGDVLARVSTDSAKTRDITGGLPRVAELFEARRPKDAAIIAEKSGSIAFGRDYKNKRRLTLTPHDGSDAVEYLIPKGKHIHLQDGDVVELGDYIVDGNPAPHDILAIKGVEELAAYLVNEIQEVYRLQGVSINDKHIEVIVRQMLQKVEITDGGDSDILTGDQIDRTELADFNEKLLAEGKKPIQGVPVLLGITKASLQTKSFISAASFQETTRVLTEAAVNGKVDTLDGLKENVIVGSLIPAGTGSLAADIRSIARRRDNLILQQRSAENAANAAELSELPPAAAE</sequence>
<feature type="chain" id="PRO_1000165843" description="DNA-directed RNA polymerase subunit beta'">
    <location>
        <begin position="1"/>
        <end position="1405"/>
    </location>
</feature>
<feature type="binding site" evidence="1">
    <location>
        <position position="71"/>
    </location>
    <ligand>
        <name>Zn(2+)</name>
        <dbReference type="ChEBI" id="CHEBI:29105"/>
        <label>1</label>
    </ligand>
</feature>
<feature type="binding site" evidence="1">
    <location>
        <position position="73"/>
    </location>
    <ligand>
        <name>Zn(2+)</name>
        <dbReference type="ChEBI" id="CHEBI:29105"/>
        <label>1</label>
    </ligand>
</feature>
<feature type="binding site" evidence="1">
    <location>
        <position position="86"/>
    </location>
    <ligand>
        <name>Zn(2+)</name>
        <dbReference type="ChEBI" id="CHEBI:29105"/>
        <label>1</label>
    </ligand>
</feature>
<feature type="binding site" evidence="1">
    <location>
        <position position="89"/>
    </location>
    <ligand>
        <name>Zn(2+)</name>
        <dbReference type="ChEBI" id="CHEBI:29105"/>
        <label>1</label>
    </ligand>
</feature>
<feature type="binding site" evidence="1">
    <location>
        <position position="462"/>
    </location>
    <ligand>
        <name>Mg(2+)</name>
        <dbReference type="ChEBI" id="CHEBI:18420"/>
    </ligand>
</feature>
<feature type="binding site" evidence="1">
    <location>
        <position position="464"/>
    </location>
    <ligand>
        <name>Mg(2+)</name>
        <dbReference type="ChEBI" id="CHEBI:18420"/>
    </ligand>
</feature>
<feature type="binding site" evidence="1">
    <location>
        <position position="466"/>
    </location>
    <ligand>
        <name>Mg(2+)</name>
        <dbReference type="ChEBI" id="CHEBI:18420"/>
    </ligand>
</feature>
<feature type="binding site" evidence="1">
    <location>
        <position position="820"/>
    </location>
    <ligand>
        <name>Zn(2+)</name>
        <dbReference type="ChEBI" id="CHEBI:29105"/>
        <label>2</label>
    </ligand>
</feature>
<feature type="binding site" evidence="1">
    <location>
        <position position="893"/>
    </location>
    <ligand>
        <name>Zn(2+)</name>
        <dbReference type="ChEBI" id="CHEBI:29105"/>
        <label>2</label>
    </ligand>
</feature>
<feature type="binding site" evidence="1">
    <location>
        <position position="900"/>
    </location>
    <ligand>
        <name>Zn(2+)</name>
        <dbReference type="ChEBI" id="CHEBI:29105"/>
        <label>2</label>
    </ligand>
</feature>
<feature type="binding site" evidence="1">
    <location>
        <position position="903"/>
    </location>
    <ligand>
        <name>Zn(2+)</name>
        <dbReference type="ChEBI" id="CHEBI:29105"/>
        <label>2</label>
    </ligand>
</feature>